<name>FKS1_CORMM</name>
<dbReference type="EC" id="2.4.1.34" evidence="5"/>
<dbReference type="EMBL" id="JH126399">
    <property type="protein sequence ID" value="EGX96528.1"/>
    <property type="status" value="ALT_INIT"/>
    <property type="molecule type" value="Genomic_DNA"/>
</dbReference>
<dbReference type="RefSeq" id="XP_006666405.1">
    <property type="nucleotide sequence ID" value="XM_006666342.1"/>
</dbReference>
<dbReference type="SMR" id="G3J3K0"/>
<dbReference type="FunCoup" id="G3J3K0">
    <property type="interactions" value="498"/>
</dbReference>
<dbReference type="STRING" id="983644.G3J3K0"/>
<dbReference type="GeneID" id="18163217"/>
<dbReference type="KEGG" id="cmt:CCM_01185"/>
<dbReference type="VEuPathDB" id="FungiDB:CCM_01185"/>
<dbReference type="eggNOG" id="KOG0916">
    <property type="taxonomic scope" value="Eukaryota"/>
</dbReference>
<dbReference type="HOGENOM" id="CLU_000844_0_1_1"/>
<dbReference type="InParanoid" id="G3J3K0"/>
<dbReference type="OrthoDB" id="1880850at2759"/>
<dbReference type="Proteomes" id="UP000001610">
    <property type="component" value="Unassembled WGS sequence"/>
</dbReference>
<dbReference type="GO" id="GO:0000148">
    <property type="term" value="C:1,3-beta-D-glucan synthase complex"/>
    <property type="evidence" value="ECO:0007669"/>
    <property type="project" value="InterPro"/>
</dbReference>
<dbReference type="GO" id="GO:0005886">
    <property type="term" value="C:plasma membrane"/>
    <property type="evidence" value="ECO:0007669"/>
    <property type="project" value="UniProtKB-SubCell"/>
</dbReference>
<dbReference type="GO" id="GO:0003843">
    <property type="term" value="F:1,3-beta-D-glucan synthase activity"/>
    <property type="evidence" value="ECO:0007669"/>
    <property type="project" value="UniProtKB-EC"/>
</dbReference>
<dbReference type="GO" id="GO:0006075">
    <property type="term" value="P:(1-&gt;3)-beta-D-glucan biosynthetic process"/>
    <property type="evidence" value="ECO:0007669"/>
    <property type="project" value="InterPro"/>
</dbReference>
<dbReference type="GO" id="GO:0071555">
    <property type="term" value="P:cell wall organization"/>
    <property type="evidence" value="ECO:0007669"/>
    <property type="project" value="UniProtKB-KW"/>
</dbReference>
<dbReference type="GO" id="GO:0051278">
    <property type="term" value="P:fungal-type cell wall polysaccharide biosynthetic process"/>
    <property type="evidence" value="ECO:0007669"/>
    <property type="project" value="TreeGrafter"/>
</dbReference>
<dbReference type="InterPro" id="IPR026899">
    <property type="entry name" value="FKS1-like_dom1"/>
</dbReference>
<dbReference type="InterPro" id="IPR056261">
    <property type="entry name" value="FKS1-like_dom2"/>
</dbReference>
<dbReference type="InterPro" id="IPR003440">
    <property type="entry name" value="Glyco_trans_48_dom"/>
</dbReference>
<dbReference type="PANTHER" id="PTHR12741:SF48">
    <property type="entry name" value="1,3-BETA-GLUCAN SYNTHASE COMPONENT FKS1-RELATED"/>
    <property type="match status" value="1"/>
</dbReference>
<dbReference type="PANTHER" id="PTHR12741">
    <property type="entry name" value="LYST-INTERACTING PROTEIN LIP5 DOPAMINE RESPONSIVE PROTEIN DRG-1"/>
    <property type="match status" value="1"/>
</dbReference>
<dbReference type="Pfam" id="PF14288">
    <property type="entry name" value="FKS1_dom1"/>
    <property type="match status" value="1"/>
</dbReference>
<dbReference type="Pfam" id="PF23605">
    <property type="entry name" value="FKS1_dom2"/>
    <property type="match status" value="1"/>
</dbReference>
<dbReference type="Pfam" id="PF02364">
    <property type="entry name" value="Glucan_synthase"/>
    <property type="match status" value="1"/>
</dbReference>
<dbReference type="SMART" id="SM01205">
    <property type="entry name" value="FKS1_dom1"/>
    <property type="match status" value="1"/>
</dbReference>
<proteinExistence type="evidence at protein level"/>
<gene>
    <name evidence="6" type="primary">GLS1</name>
    <name evidence="9" type="ORF">CCM_01185</name>
</gene>
<accession>G3J3K0</accession>
<organism evidence="10">
    <name type="scientific">Cordyceps militaris (strain CM01)</name>
    <name type="common">Caterpillar fungus</name>
    <dbReference type="NCBI Taxonomy" id="983644"/>
    <lineage>
        <taxon>Eukaryota</taxon>
        <taxon>Fungi</taxon>
        <taxon>Dikarya</taxon>
        <taxon>Ascomycota</taxon>
        <taxon>Pezizomycotina</taxon>
        <taxon>Sordariomycetes</taxon>
        <taxon>Hypocreomycetidae</taxon>
        <taxon>Hypocreales</taxon>
        <taxon>Cordycipitaceae</taxon>
        <taxon>Cordyceps</taxon>
    </lineage>
</organism>
<comment type="function">
    <text evidence="1 5">Catalytic subunit of the 1,3-beta-glucan synthase (GS) (PubMed:35816703). Synthesizes 1,3-beta-glucan, a major structural component of the fungal cell wall (PubMed:35816703). Involved in cell wall synthesis, maintenance and remodeling (By similarity).</text>
</comment>
<comment type="catalytic activity">
    <reaction evidence="5">
        <text>[(1-&gt;3)-beta-D-glucosyl](n) + UDP-alpha-D-glucose = [(1-&gt;3)-beta-D-glucosyl](n+1) + UDP + H(+)</text>
        <dbReference type="Rhea" id="RHEA:21476"/>
        <dbReference type="Rhea" id="RHEA-COMP:11146"/>
        <dbReference type="Rhea" id="RHEA-COMP:14303"/>
        <dbReference type="ChEBI" id="CHEBI:15378"/>
        <dbReference type="ChEBI" id="CHEBI:37671"/>
        <dbReference type="ChEBI" id="CHEBI:58223"/>
        <dbReference type="ChEBI" id="CHEBI:58885"/>
        <dbReference type="EC" id="2.4.1.34"/>
    </reaction>
</comment>
<comment type="activity regulation">
    <text evidence="5">Activated by iron ions (PubMed:35816703). Inhibited by manganese, copper and zinc ions (PubMed:35816703).</text>
</comment>
<comment type="biophysicochemical properties">
    <kinetics>
        <KM evidence="5">84.3 uM for UDP-glucose (at 37 degrees Celsius and pH 7)</KM>
        <text evidence="5">kcat is 1.42 min(-1) for UDP-glucose (at 37 degrees Celsius and pH 7).</text>
    </kinetics>
    <phDependence>
        <text evidence="5">Optimum pH is 7.</text>
    </phDependence>
    <temperatureDependence>
        <text evidence="5">Optimum temperature is 37 degrees Celsius.</text>
    </temperatureDependence>
</comment>
<comment type="subunit">
    <text evidence="8">Component of the 1,3-beta-glucan synthase (GS) complex composed of a catalytic subunit GLS1 and a regulatory subunit RHO1.</text>
</comment>
<comment type="subcellular location">
    <subcellularLocation>
        <location evidence="5">Membrane</location>
        <topology evidence="2">Multi-pass membrane protein</topology>
    </subcellularLocation>
    <subcellularLocation>
        <location evidence="1">Cell membrane</location>
        <topology evidence="2">Multi-pass membrane protein</topology>
    </subcellularLocation>
</comment>
<comment type="developmental stage">
    <text evidence="5">Expressed in mycelia (at protein level).</text>
</comment>
<comment type="similarity">
    <text evidence="7">Belongs to the glycosyltransferase 48 family.</text>
</comment>
<comment type="sequence caution" evidence="8">
    <conflict type="erroneous initiation">
        <sequence resource="EMBL-CDS" id="EGX96528"/>
    </conflict>
    <text>Extended N-terminus.</text>
</comment>
<evidence type="ECO:0000250" key="1">
    <source>
        <dbReference type="UniProtKB" id="P38631"/>
    </source>
</evidence>
<evidence type="ECO:0000255" key="2"/>
<evidence type="ECO:0000255" key="3">
    <source>
        <dbReference type="PROSITE-ProRule" id="PRU00498"/>
    </source>
</evidence>
<evidence type="ECO:0000256" key="4">
    <source>
        <dbReference type="SAM" id="MobiDB-lite"/>
    </source>
</evidence>
<evidence type="ECO:0000269" key="5">
    <source>
    </source>
</evidence>
<evidence type="ECO:0000303" key="6">
    <source>
    </source>
</evidence>
<evidence type="ECO:0000305" key="7"/>
<evidence type="ECO:0000305" key="8">
    <source>
    </source>
</evidence>
<evidence type="ECO:0000312" key="9">
    <source>
        <dbReference type="EMBL" id="EGX96528.1"/>
    </source>
</evidence>
<evidence type="ECO:0000312" key="10">
    <source>
        <dbReference type="Proteomes" id="UP000001610"/>
    </source>
</evidence>
<reference evidence="10" key="1">
    <citation type="journal article" date="2011" name="Genome Biol.">
        <title>Genome sequence of the insect pathogenic fungus Cordyceps militaris, a valued traditional Chinese medicine.</title>
        <authorList>
            <person name="Zheng P."/>
            <person name="Xia Y."/>
            <person name="Xiao G."/>
            <person name="Xiong C."/>
            <person name="Hu X."/>
            <person name="Zhang S."/>
            <person name="Zheng H."/>
            <person name="Huang Y."/>
            <person name="Zhou Y."/>
            <person name="Wang S."/>
            <person name="Zhao G.-P."/>
            <person name="Liu X."/>
            <person name="St Leger R.J."/>
            <person name="Wang C."/>
        </authorList>
    </citation>
    <scope>NUCLEOTIDE SEQUENCE [LARGE SCALE GENOMIC DNA]</scope>
    <source>
        <strain>CM01</strain>
    </source>
</reference>
<reference evidence="7" key="2">
    <citation type="journal article" date="2022" name="J. Agric. Food Chem.">
        <title>Functional Characterization and Structural Basis of the beta-1,3-Glucan Synthase CMGLS from Mushroom Cordyceps militaris.</title>
        <authorList>
            <person name="Fu X."/>
            <person name="Zan X.Y."/>
            <person name="Sun L."/>
            <person name="Tan M."/>
            <person name="Cui F.J."/>
            <person name="Liang Y.Y."/>
            <person name="Meng L.J."/>
            <person name="Sun W.J."/>
        </authorList>
    </citation>
    <scope>FUNCTION</scope>
    <scope>CATALYTIC ACTIVITY</scope>
    <scope>ACTIVITY REGULATION</scope>
    <scope>BIOPHYSICOCHEMICAL PROPERTIES</scope>
    <scope>IDENTIFICATION IN THE 1,3-BETA-GLUCAN SYNTHASE (GS) COMPLEX</scope>
    <scope>SUBCELLULAR LOCATION</scope>
    <scope>DEVELOPMENTAL STAGE</scope>
    <scope>IDENTIFICATION BY MASS SPECTROMETRY</scope>
</reference>
<keyword id="KW-1003">Cell membrane</keyword>
<keyword id="KW-0961">Cell wall biogenesis/degradation</keyword>
<keyword id="KW-0325">Glycoprotein</keyword>
<keyword id="KW-0328">Glycosyltransferase</keyword>
<keyword id="KW-0472">Membrane</keyword>
<keyword id="KW-1185">Reference proteome</keyword>
<keyword id="KW-0808">Transferase</keyword>
<keyword id="KW-0812">Transmembrane</keyword>
<keyword id="KW-1133">Transmembrane helix</keyword>
<feature type="chain" id="PRO_0000456875" description="1,3-beta-glucan synthase component">
    <location>
        <begin position="1"/>
        <end position="1946"/>
    </location>
</feature>
<feature type="transmembrane region" description="Helical" evidence="2">
    <location>
        <begin position="489"/>
        <end position="509"/>
    </location>
</feature>
<feature type="transmembrane region" description="Helical" evidence="2">
    <location>
        <begin position="537"/>
        <end position="557"/>
    </location>
</feature>
<feature type="transmembrane region" description="Helical" evidence="2">
    <location>
        <begin position="576"/>
        <end position="596"/>
    </location>
</feature>
<feature type="transmembrane region" description="Helical" evidence="2">
    <location>
        <begin position="618"/>
        <end position="638"/>
    </location>
</feature>
<feature type="transmembrane region" description="Helical" evidence="2">
    <location>
        <begin position="675"/>
        <end position="695"/>
    </location>
</feature>
<feature type="transmembrane region" description="Helical" evidence="2">
    <location>
        <begin position="734"/>
        <end position="754"/>
    </location>
</feature>
<feature type="transmembrane region" description="Helical" evidence="2">
    <location>
        <begin position="1356"/>
        <end position="1376"/>
    </location>
</feature>
<feature type="transmembrane region" description="Helical" evidence="2">
    <location>
        <begin position="1413"/>
        <end position="1433"/>
    </location>
</feature>
<feature type="transmembrane region" description="Helical" evidence="2">
    <location>
        <begin position="1500"/>
        <end position="1520"/>
    </location>
</feature>
<feature type="transmembrane region" description="Helical" evidence="2">
    <location>
        <begin position="1523"/>
        <end position="1543"/>
    </location>
</feature>
<feature type="transmembrane region" description="Helical" evidence="2">
    <location>
        <begin position="1615"/>
        <end position="1635"/>
    </location>
</feature>
<feature type="transmembrane region" description="Helical" evidence="2">
    <location>
        <begin position="1667"/>
        <end position="1687"/>
    </location>
</feature>
<feature type="transmembrane region" description="Helical" evidence="2">
    <location>
        <begin position="1703"/>
        <end position="1723"/>
    </location>
</feature>
<feature type="transmembrane region" description="Helical" evidence="2">
    <location>
        <begin position="1738"/>
        <end position="1758"/>
    </location>
</feature>
<feature type="transmembrane region" description="Helical" evidence="2">
    <location>
        <begin position="1803"/>
        <end position="1823"/>
    </location>
</feature>
<feature type="transmembrane region" description="Helical" evidence="2">
    <location>
        <begin position="1864"/>
        <end position="1884"/>
    </location>
</feature>
<feature type="region of interest" description="Disordered" evidence="4">
    <location>
        <begin position="1"/>
        <end position="127"/>
    </location>
</feature>
<feature type="region of interest" description="Disordered" evidence="4">
    <location>
        <begin position="152"/>
        <end position="198"/>
    </location>
</feature>
<feature type="region of interest" description="Disordered" evidence="4">
    <location>
        <begin position="297"/>
        <end position="316"/>
    </location>
</feature>
<feature type="region of interest" description="Disordered" evidence="4">
    <location>
        <begin position="1920"/>
        <end position="1946"/>
    </location>
</feature>
<feature type="compositionally biased region" description="Low complexity" evidence="4">
    <location>
        <begin position="24"/>
        <end position="34"/>
    </location>
</feature>
<feature type="compositionally biased region" description="Low complexity" evidence="4">
    <location>
        <begin position="43"/>
        <end position="60"/>
    </location>
</feature>
<feature type="compositionally biased region" description="Low complexity" evidence="4">
    <location>
        <begin position="91"/>
        <end position="109"/>
    </location>
</feature>
<feature type="compositionally biased region" description="Polar residues" evidence="4">
    <location>
        <begin position="165"/>
        <end position="180"/>
    </location>
</feature>
<feature type="compositionally biased region" description="Low complexity" evidence="4">
    <location>
        <begin position="1925"/>
        <end position="1940"/>
    </location>
</feature>
<feature type="glycosylation site" description="N-linked (GlcNAc...) asparagine" evidence="3">
    <location>
        <position position="171"/>
    </location>
</feature>
<feature type="glycosylation site" description="N-linked (GlcNAc...) asparagine" evidence="3">
    <location>
        <position position="290"/>
    </location>
</feature>
<feature type="glycosylation site" description="N-linked (GlcNAc...) asparagine" evidence="3">
    <location>
        <position position="1017"/>
    </location>
</feature>
<feature type="glycosylation site" description="N-linked (GlcNAc...) asparagine" evidence="3">
    <location>
        <position position="1312"/>
    </location>
</feature>
<feature type="glycosylation site" description="N-linked (GlcNAc...) asparagine" evidence="3">
    <location>
        <position position="1649"/>
    </location>
</feature>
<feature type="glycosylation site" description="N-linked (GlcNAc...) asparagine" evidence="3">
    <location>
        <position position="1918"/>
    </location>
</feature>
<sequence>MSGYQGGHHDQYDQGYGQAGHGDGYYQDDQYYDQGHGDHAAQGDHAAQGDHGAQGTQGDGYYDESGYYHADANNPYHQDGGYYDGHDQYQDDYYNNNQGYYDGEYNQGYAQGGRHPSEEESETFSDFTMRSDMARAAEMDYYGRGDEQYNGYGEGGRGYRPPSSQLSYGGNRSSGASTPNYGMEYGNGLASQRSKEPYPAWTSDAQIPLSKEEIEDIFLDLTSKFGFQRDSMRNMYDHLMTLLDSRASRMTPNQALLSLHADYIGGDNANYRKWYFAAHLDLDDAVGFANASTKNRKRKAKKGKKKGGEAGNEAETLQELEGDDSLEAAEYRWKTRMNRMSQYDRVRQIALYLLCWGEANQVRFMPECLCFIFKCADDYLNSPACQALVEPVEEFTFLNNVITPLYQYCRDQGYEILNGVYVRRERDHKHIIGYDDCNQLFWYPEGIERIVLEDKSKLVDLPPAERYLKLKEVNWKKCFFKTYKESRSWFHLLLNFNRIWVIHLTMFWFYTSHNAPSLITYQYEQQKDNQPPASKQFSIVGFGGAIASLIQIFATLAEWVYVPRRWAGAQHLTKRLLFLIVILVLNVAPGVKVFMFHGNKDGKDADQKNKDTPIDKAIGIVHFVIAVFTFLFFSVMPLGGLLGSYLTKKSRRYVASQTFTASYPRLTGNDMAMSFGLWLTVFGAKFGESYVYLTLSFRDPIRYLSIMKIDCLGDAMFGSTAATQQILCKHQPTIVLILMTFTDLIFFFLDTYLFYVILNTVFSIARSFYIGSSIWTPWRNIFSRLPKRIYSKVLATTDMEIKYKPKVLISQVWNAIVISMYREHLLAIDHVQKLLYHQVPSEQEGKRTLRAPTFFVSQEDHSFKTEFFPSHSEAERRISFFAQSLSTPIPEPVPVDNMPTFTVMIPHYSEKILLSLREIIREDEPYSRVTLLEYLKQLHPHEWECFVKDTKILADETAQMNGEPEKSEKDTAKSKIDDLPFYCIGFKSSAPEYTLRTRIWASLRSQTLYRTVSGFMNYSRAIKLLYRVENPEVVQMFGGNSEKLERELERMARRKFKLVVSMQRYSKFKKEEMENAEFLLRAYPDLQIAYLDEEPPLAEGEEPRLYSALIDGHSELMENGMRRPKFRVQLSGNPVLGDGKSDNQNHAIIFYRGEYIQLIDANQDNYLEECLKIRSVLAEFEEMKPDNHSPYTPGVKNDVHTPVAILGAREYIFSENIGILGDVAAGKEQTFGTLFARTMAQVGGKLHYGHPDFLNGIFMTTRGGVSKAQKGLHLNEDIFAGMNALVRGGRIKHCEYYQCGKGRDLGFGSILNFTTKIGTGMGEQWLSREYYYLGTQLPLDRFLSFYYAHAGFHVNNMFIMLSVQSFMLTLMSIGALRHETIRCDYNPQKPITDPLYPTKCSNTDELMGWVYRCIISIFFVFFISFVPLIVQELTERGVWRAALRFIKQFCSLSPFFEVFVCQIYANSVQSDLAFGGARYIGTGRGFATARIPFGVLYSRFAGQSIYFGARLLMMLLFATSTAWQPALTYFWIVLLGLIISPFLYNPHQFAWTDFFIDYRDFLRWLSRGNSRAHASSWIMFCRLSRTRITGYKRKVMGDASAKMSADVPRAAVANIFLTEILTPLLLAATTTVAYLFVNAQTGVTDNDKNSSSSPGFKIGPSGALIRLAVVAFAPIGINAGVLAAMFGMACCMGPVLNMCCKKFGPVLAGIAHGAAAVFMIIFFEVMYVLEGFNFARALAGIIAAMCIQRFIFKLIVSLALTREFKTDQSNIAFWNGKWYSMGWHSVSQPAREFLCKITELSMFSADFILGHWILFMMAPLILIPQIDKIHSMMLFWLLPSRQIRPPIYSMKQSKLRRRRVIRFAILYFVLFIIFLALVVAPGVIGKKFLGDTIFKALDNGNGGPANLHLLQPWGLDNNNTEGKTETGTKAGGADASATDASKLRLF</sequence>
<protein>
    <recommendedName>
        <fullName evidence="1">1,3-beta-glucan synthase component</fullName>
        <ecNumber evidence="5">2.4.1.34</ecNumber>
    </recommendedName>
    <alternativeName>
        <fullName evidence="1">1,3-beta-D-glucan-UDP glucosyltransferase</fullName>
    </alternativeName>
    <alternativeName>
        <fullName evidence="6">CmGLS</fullName>
    </alternativeName>
</protein>